<evidence type="ECO:0000250" key="1">
    <source>
        <dbReference type="UniProtKB" id="Q04638"/>
    </source>
</evidence>
<evidence type="ECO:0000250" key="2">
    <source>
        <dbReference type="UniProtKB" id="Q9UBS8"/>
    </source>
</evidence>
<evidence type="ECO:0000255" key="3"/>
<evidence type="ECO:0000255" key="4">
    <source>
        <dbReference type="PROSITE-ProRule" id="PRU01221"/>
    </source>
</evidence>
<evidence type="ECO:0000256" key="5">
    <source>
        <dbReference type="SAM" id="MobiDB-lite"/>
    </source>
</evidence>
<evidence type="ECO:0000305" key="6"/>
<proteinExistence type="inferred from homology"/>
<organism>
    <name type="scientific">Dictyostelium discoideum</name>
    <name type="common">Social amoeba</name>
    <dbReference type="NCBI Taxonomy" id="44689"/>
    <lineage>
        <taxon>Eukaryota</taxon>
        <taxon>Amoebozoa</taxon>
        <taxon>Evosea</taxon>
        <taxon>Eumycetozoa</taxon>
        <taxon>Dictyostelia</taxon>
        <taxon>Dictyosteliales</taxon>
        <taxon>Dictyosteliaceae</taxon>
        <taxon>Dictyostelium</taxon>
    </lineage>
</organism>
<keyword id="KW-0175">Coiled coil</keyword>
<keyword id="KW-0472">Membrane</keyword>
<keyword id="KW-0479">Metal-binding</keyword>
<keyword id="KW-1185">Reference proteome</keyword>
<keyword id="KW-0677">Repeat</keyword>
<keyword id="KW-0808">Transferase</keyword>
<keyword id="KW-0812">Transmembrane</keyword>
<keyword id="KW-1133">Transmembrane helix</keyword>
<keyword id="KW-0833">Ubl conjugation pathway</keyword>
<keyword id="KW-0862">Zinc</keyword>
<keyword id="KW-0863">Zinc-finger</keyword>
<comment type="function">
    <text evidence="1">E3 ubiquitin-protein ligase.</text>
</comment>
<comment type="catalytic activity">
    <reaction evidence="2">
        <text>[E2 ubiquitin-conjugating enzyme]-S-ubiquitinyl-L-cysteine + [acceptor protein]-L-lysine = [E2 ubiquitin-conjugating enzyme]-L-cysteine + [acceptor protein]-N(6)-ubiquitinyl-L-lysine.</text>
        <dbReference type="EC" id="2.3.2.31"/>
    </reaction>
</comment>
<comment type="pathway">
    <text evidence="1">Protein modification; protein ubiquitination.</text>
</comment>
<comment type="subcellular location">
    <subcellularLocation>
        <location evidence="6">Membrane</location>
        <topology evidence="6">Single-pass membrane protein</topology>
    </subcellularLocation>
</comment>
<comment type="similarity">
    <text evidence="6">Belongs to the RBR family. RNF14 subfamily.</text>
</comment>
<comment type="sequence caution" evidence="6">
    <conflict type="erroneous gene model prediction">
        <sequence resource="EMBL-CDS" id="EAL61124"/>
    </conflict>
</comment>
<comment type="sequence caution" evidence="6">
    <conflict type="erroneous gene model prediction">
        <sequence resource="EMBL-CDS" id="EAL61156"/>
    </conflict>
</comment>
<reference key="1">
    <citation type="journal article" date="2005" name="Nature">
        <title>The genome of the social amoeba Dictyostelium discoideum.</title>
        <authorList>
            <person name="Eichinger L."/>
            <person name="Pachebat J.A."/>
            <person name="Gloeckner G."/>
            <person name="Rajandream M.A."/>
            <person name="Sucgang R."/>
            <person name="Berriman M."/>
            <person name="Song J."/>
            <person name="Olsen R."/>
            <person name="Szafranski K."/>
            <person name="Xu Q."/>
            <person name="Tunggal B."/>
            <person name="Kummerfeld S."/>
            <person name="Madera M."/>
            <person name="Konfortov B.A."/>
            <person name="Rivero F."/>
            <person name="Bankier A.T."/>
            <person name="Lehmann R."/>
            <person name="Hamlin N."/>
            <person name="Davies R."/>
            <person name="Gaudet P."/>
            <person name="Fey P."/>
            <person name="Pilcher K."/>
            <person name="Chen G."/>
            <person name="Saunders D."/>
            <person name="Sodergren E.J."/>
            <person name="Davis P."/>
            <person name="Kerhornou A."/>
            <person name="Nie X."/>
            <person name="Hall N."/>
            <person name="Anjard C."/>
            <person name="Hemphill L."/>
            <person name="Bason N."/>
            <person name="Farbrother P."/>
            <person name="Desany B."/>
            <person name="Just E."/>
            <person name="Morio T."/>
            <person name="Rost R."/>
            <person name="Churcher C.M."/>
            <person name="Cooper J."/>
            <person name="Haydock S."/>
            <person name="van Driessche N."/>
            <person name="Cronin A."/>
            <person name="Goodhead I."/>
            <person name="Muzny D.M."/>
            <person name="Mourier T."/>
            <person name="Pain A."/>
            <person name="Lu M."/>
            <person name="Harper D."/>
            <person name="Lindsay R."/>
            <person name="Hauser H."/>
            <person name="James K.D."/>
            <person name="Quiles M."/>
            <person name="Madan Babu M."/>
            <person name="Saito T."/>
            <person name="Buchrieser C."/>
            <person name="Wardroper A."/>
            <person name="Felder M."/>
            <person name="Thangavelu M."/>
            <person name="Johnson D."/>
            <person name="Knights A."/>
            <person name="Loulseged H."/>
            <person name="Mungall K.L."/>
            <person name="Oliver K."/>
            <person name="Price C."/>
            <person name="Quail M.A."/>
            <person name="Urushihara H."/>
            <person name="Hernandez J."/>
            <person name="Rabbinowitsch E."/>
            <person name="Steffen D."/>
            <person name="Sanders M."/>
            <person name="Ma J."/>
            <person name="Kohara Y."/>
            <person name="Sharp S."/>
            <person name="Simmonds M.N."/>
            <person name="Spiegler S."/>
            <person name="Tivey A."/>
            <person name="Sugano S."/>
            <person name="White B."/>
            <person name="Walker D."/>
            <person name="Woodward J.R."/>
            <person name="Winckler T."/>
            <person name="Tanaka Y."/>
            <person name="Shaulsky G."/>
            <person name="Schleicher M."/>
            <person name="Weinstock G.M."/>
            <person name="Rosenthal A."/>
            <person name="Cox E.C."/>
            <person name="Chisholm R.L."/>
            <person name="Gibbs R.A."/>
            <person name="Loomis W.F."/>
            <person name="Platzer M."/>
            <person name="Kay R.R."/>
            <person name="Williams J.G."/>
            <person name="Dear P.H."/>
            <person name="Noegel A.A."/>
            <person name="Barrell B.G."/>
            <person name="Kuspa A."/>
        </authorList>
    </citation>
    <scope>NUCLEOTIDE SEQUENCE [LARGE SCALE GENOMIC DNA]</scope>
    <source>
        <strain>AX4</strain>
    </source>
</reference>
<name>Y5521_DICDI</name>
<dbReference type="EC" id="2.3.2.31" evidence="1"/>
<dbReference type="EMBL" id="AAFI02000194">
    <property type="protein sequence ID" value="EAL61124.1"/>
    <property type="status" value="ALT_SEQ"/>
    <property type="molecule type" value="Genomic_DNA"/>
</dbReference>
<dbReference type="EMBL" id="AAFI02000194">
    <property type="protein sequence ID" value="EAL61156.1"/>
    <property type="status" value="ALT_SEQ"/>
    <property type="molecule type" value="Genomic_DNA"/>
</dbReference>
<dbReference type="RefSeq" id="XP_629545.1">
    <property type="nucleotide sequence ID" value="XM_629543.1"/>
</dbReference>
<dbReference type="RefSeq" id="XP_629546.1">
    <property type="nucleotide sequence ID" value="XM_629544.1"/>
</dbReference>
<dbReference type="FunCoup" id="Q54CX4">
    <property type="interactions" value="119"/>
</dbReference>
<dbReference type="GlyGen" id="Q54CX4">
    <property type="glycosylation" value="1 site"/>
</dbReference>
<dbReference type="PaxDb" id="44689-DDB0184497"/>
<dbReference type="EnsemblProtists" id="EAL61124">
    <property type="protein sequence ID" value="EAL61124"/>
    <property type="gene ID" value="DDB_G0292642"/>
</dbReference>
<dbReference type="EnsemblProtists" id="EAL61156">
    <property type="protein sequence ID" value="EAL61156"/>
    <property type="gene ID" value="DDB_G0292706"/>
</dbReference>
<dbReference type="GeneID" id="8628803"/>
<dbReference type="KEGG" id="ddi:DDB_G0292642"/>
<dbReference type="KEGG" id="ddi:DDB_G0292706"/>
<dbReference type="dictyBase" id="DDB_G0292642"/>
<dbReference type="VEuPathDB" id="AmoebaDB:DDB_G0292642"/>
<dbReference type="VEuPathDB" id="AmoebaDB:DDB_G0292706"/>
<dbReference type="eggNOG" id="KOG1815">
    <property type="taxonomic scope" value="Eukaryota"/>
</dbReference>
<dbReference type="InParanoid" id="Q54CX4"/>
<dbReference type="UniPathway" id="UPA00143"/>
<dbReference type="PRO" id="PR:Q54CX4"/>
<dbReference type="Proteomes" id="UP000002195">
    <property type="component" value="Chromosome 6"/>
</dbReference>
<dbReference type="GO" id="GO:0005737">
    <property type="term" value="C:cytoplasm"/>
    <property type="evidence" value="ECO:0000318"/>
    <property type="project" value="GO_Central"/>
</dbReference>
<dbReference type="GO" id="GO:0016020">
    <property type="term" value="C:membrane"/>
    <property type="evidence" value="ECO:0007669"/>
    <property type="project" value="UniProtKB-SubCell"/>
</dbReference>
<dbReference type="GO" id="GO:0000151">
    <property type="term" value="C:ubiquitin ligase complex"/>
    <property type="evidence" value="ECO:0000318"/>
    <property type="project" value="GO_Central"/>
</dbReference>
<dbReference type="GO" id="GO:0031624">
    <property type="term" value="F:ubiquitin conjugating enzyme binding"/>
    <property type="evidence" value="ECO:0000318"/>
    <property type="project" value="GO_Central"/>
</dbReference>
<dbReference type="GO" id="GO:0061630">
    <property type="term" value="F:ubiquitin protein ligase activity"/>
    <property type="evidence" value="ECO:0000318"/>
    <property type="project" value="GO_Central"/>
</dbReference>
<dbReference type="GO" id="GO:0008270">
    <property type="term" value="F:zinc ion binding"/>
    <property type="evidence" value="ECO:0007669"/>
    <property type="project" value="UniProtKB-KW"/>
</dbReference>
<dbReference type="GO" id="GO:0016567">
    <property type="term" value="P:protein ubiquitination"/>
    <property type="evidence" value="ECO:0007669"/>
    <property type="project" value="UniProtKB-UniPathway"/>
</dbReference>
<dbReference type="GO" id="GO:0006511">
    <property type="term" value="P:ubiquitin-dependent protein catabolic process"/>
    <property type="evidence" value="ECO:0000318"/>
    <property type="project" value="GO_Central"/>
</dbReference>
<dbReference type="CDD" id="cd20335">
    <property type="entry name" value="BRcat_RBR"/>
    <property type="match status" value="1"/>
</dbReference>
<dbReference type="CDD" id="cd20354">
    <property type="entry name" value="Rcat_RBR_RNF14"/>
    <property type="match status" value="1"/>
</dbReference>
<dbReference type="FunFam" id="1.20.120.1750:FF:000079">
    <property type="entry name" value="RBR-type E3 ubiquitin transferase"/>
    <property type="match status" value="1"/>
</dbReference>
<dbReference type="FunFam" id="3.30.40.10:FF:000051">
    <property type="entry name" value="RBR-type E3 ubiquitin transferase"/>
    <property type="match status" value="1"/>
</dbReference>
<dbReference type="Gene3D" id="1.20.120.1750">
    <property type="match status" value="1"/>
</dbReference>
<dbReference type="Gene3D" id="3.30.40.10">
    <property type="entry name" value="Zinc/RING finger domain, C3HC4 (zinc finger)"/>
    <property type="match status" value="1"/>
</dbReference>
<dbReference type="InterPro" id="IPR031127">
    <property type="entry name" value="E3_UB_ligase_RBR"/>
</dbReference>
<dbReference type="InterPro" id="IPR002867">
    <property type="entry name" value="IBR_dom"/>
</dbReference>
<dbReference type="InterPro" id="IPR047548">
    <property type="entry name" value="Rcat_RBR_RNF14"/>
</dbReference>
<dbReference type="InterPro" id="IPR044066">
    <property type="entry name" value="TRIAD_supradom"/>
</dbReference>
<dbReference type="InterPro" id="IPR018957">
    <property type="entry name" value="Znf_C3HC4_RING-type"/>
</dbReference>
<dbReference type="InterPro" id="IPR001841">
    <property type="entry name" value="Znf_RING"/>
</dbReference>
<dbReference type="InterPro" id="IPR013083">
    <property type="entry name" value="Znf_RING/FYVE/PHD"/>
</dbReference>
<dbReference type="InterPro" id="IPR017907">
    <property type="entry name" value="Znf_RING_CS"/>
</dbReference>
<dbReference type="PANTHER" id="PTHR11685">
    <property type="entry name" value="RBR FAMILY RING FINGER AND IBR DOMAIN-CONTAINING"/>
    <property type="match status" value="1"/>
</dbReference>
<dbReference type="Pfam" id="PF01485">
    <property type="entry name" value="IBR"/>
    <property type="match status" value="1"/>
</dbReference>
<dbReference type="Pfam" id="PF22191">
    <property type="entry name" value="IBR_1"/>
    <property type="match status" value="1"/>
</dbReference>
<dbReference type="Pfam" id="PF00097">
    <property type="entry name" value="zf-C3HC4"/>
    <property type="match status" value="1"/>
</dbReference>
<dbReference type="SMART" id="SM00647">
    <property type="entry name" value="IBR"/>
    <property type="match status" value="2"/>
</dbReference>
<dbReference type="SMART" id="SM00184">
    <property type="entry name" value="RING"/>
    <property type="match status" value="2"/>
</dbReference>
<dbReference type="SUPFAM" id="SSF57850">
    <property type="entry name" value="RING/U-box"/>
    <property type="match status" value="3"/>
</dbReference>
<dbReference type="PROSITE" id="PS51873">
    <property type="entry name" value="TRIAD"/>
    <property type="match status" value="1"/>
</dbReference>
<dbReference type="PROSITE" id="PS00518">
    <property type="entry name" value="ZF_RING_1"/>
    <property type="match status" value="2"/>
</dbReference>
<dbReference type="PROSITE" id="PS50089">
    <property type="entry name" value="ZF_RING_2"/>
    <property type="match status" value="1"/>
</dbReference>
<feature type="chain" id="PRO_0000344425" description="E3 ubiquitin-protein ligase DDB_G0292642">
    <location>
        <begin position="1"/>
        <end position="903"/>
    </location>
</feature>
<feature type="transmembrane region" description="Helical" evidence="3">
    <location>
        <begin position="864"/>
        <end position="884"/>
    </location>
</feature>
<feature type="zinc finger region" description="RING-type 1" evidence="4">
    <location>
        <begin position="616"/>
        <end position="666"/>
    </location>
</feature>
<feature type="zinc finger region" description="IBR-type" evidence="4">
    <location>
        <begin position="683"/>
        <end position="746"/>
    </location>
</feature>
<feature type="zinc finger region" description="RING-type 2; atypical" evidence="4">
    <location>
        <begin position="782"/>
        <end position="811"/>
    </location>
</feature>
<feature type="region of interest" description="Disordered" evidence="5">
    <location>
        <begin position="115"/>
        <end position="137"/>
    </location>
</feature>
<feature type="region of interest" description="Disordered" evidence="5">
    <location>
        <begin position="167"/>
        <end position="236"/>
    </location>
</feature>
<feature type="region of interest" description="Disordered" evidence="5">
    <location>
        <begin position="284"/>
        <end position="366"/>
    </location>
</feature>
<feature type="region of interest" description="Disordered" evidence="5">
    <location>
        <begin position="415"/>
        <end position="487"/>
    </location>
</feature>
<feature type="region of interest" description="Disordered" evidence="5">
    <location>
        <begin position="549"/>
        <end position="576"/>
    </location>
</feature>
<feature type="region of interest" description="TRIAD supradomain" evidence="4">
    <location>
        <begin position="612"/>
        <end position="832"/>
    </location>
</feature>
<feature type="coiled-coil region" evidence="3">
    <location>
        <begin position="313"/>
        <end position="352"/>
    </location>
</feature>
<feature type="coiled-coil region" evidence="3">
    <location>
        <begin position="542"/>
        <end position="569"/>
    </location>
</feature>
<feature type="compositionally biased region" description="Low complexity" evidence="5">
    <location>
        <begin position="120"/>
        <end position="130"/>
    </location>
</feature>
<feature type="compositionally biased region" description="Low complexity" evidence="5">
    <location>
        <begin position="178"/>
        <end position="216"/>
    </location>
</feature>
<feature type="compositionally biased region" description="Acidic residues" evidence="5">
    <location>
        <begin position="217"/>
        <end position="232"/>
    </location>
</feature>
<feature type="compositionally biased region" description="Low complexity" evidence="5">
    <location>
        <begin position="287"/>
        <end position="301"/>
    </location>
</feature>
<feature type="compositionally biased region" description="Low complexity" evidence="5">
    <location>
        <begin position="311"/>
        <end position="323"/>
    </location>
</feature>
<feature type="compositionally biased region" description="Acidic residues" evidence="5">
    <location>
        <begin position="329"/>
        <end position="345"/>
    </location>
</feature>
<feature type="compositionally biased region" description="Low complexity" evidence="5">
    <location>
        <begin position="346"/>
        <end position="364"/>
    </location>
</feature>
<feature type="compositionally biased region" description="Polar residues" evidence="5">
    <location>
        <begin position="415"/>
        <end position="427"/>
    </location>
</feature>
<feature type="compositionally biased region" description="Low complexity" evidence="5">
    <location>
        <begin position="428"/>
        <end position="443"/>
    </location>
</feature>
<feature type="compositionally biased region" description="Acidic residues" evidence="5">
    <location>
        <begin position="451"/>
        <end position="466"/>
    </location>
</feature>
<feature type="compositionally biased region" description="Acidic residues" evidence="5">
    <location>
        <begin position="549"/>
        <end position="568"/>
    </location>
</feature>
<feature type="active site" evidence="4">
    <location>
        <position position="795"/>
    </location>
</feature>
<feature type="binding site" evidence="4">
    <location>
        <position position="616"/>
    </location>
    <ligand>
        <name>Zn(2+)</name>
        <dbReference type="ChEBI" id="CHEBI:29105"/>
        <label>1</label>
    </ligand>
</feature>
<feature type="binding site" evidence="4">
    <location>
        <position position="619"/>
    </location>
    <ligand>
        <name>Zn(2+)</name>
        <dbReference type="ChEBI" id="CHEBI:29105"/>
        <label>1</label>
    </ligand>
</feature>
<feature type="binding site" evidence="4">
    <location>
        <position position="634"/>
    </location>
    <ligand>
        <name>Zn(2+)</name>
        <dbReference type="ChEBI" id="CHEBI:29105"/>
        <label>2</label>
    </ligand>
</feature>
<feature type="binding site" evidence="4">
    <location>
        <position position="636"/>
    </location>
    <ligand>
        <name>Zn(2+)</name>
        <dbReference type="ChEBI" id="CHEBI:29105"/>
        <label>2</label>
    </ligand>
</feature>
<feature type="binding site" evidence="4">
    <location>
        <position position="639"/>
    </location>
    <ligand>
        <name>Zn(2+)</name>
        <dbReference type="ChEBI" id="CHEBI:29105"/>
        <label>1</label>
    </ligand>
</feature>
<feature type="binding site" evidence="4">
    <location>
        <position position="642"/>
    </location>
    <ligand>
        <name>Zn(2+)</name>
        <dbReference type="ChEBI" id="CHEBI:29105"/>
        <label>1</label>
    </ligand>
</feature>
<feature type="binding site" evidence="4">
    <location>
        <position position="661"/>
    </location>
    <ligand>
        <name>Zn(2+)</name>
        <dbReference type="ChEBI" id="CHEBI:29105"/>
        <label>2</label>
    </ligand>
</feature>
<feature type="binding site" evidence="4">
    <location>
        <position position="666"/>
    </location>
    <ligand>
        <name>Zn(2+)</name>
        <dbReference type="ChEBI" id="CHEBI:29105"/>
        <label>2</label>
    </ligand>
</feature>
<feature type="binding site" evidence="4">
    <location>
        <position position="704"/>
    </location>
    <ligand>
        <name>Zn(2+)</name>
        <dbReference type="ChEBI" id="CHEBI:29105"/>
        <label>3</label>
    </ligand>
</feature>
<feature type="binding site" evidence="4">
    <location>
        <position position="709"/>
    </location>
    <ligand>
        <name>Zn(2+)</name>
        <dbReference type="ChEBI" id="CHEBI:29105"/>
        <label>3</label>
    </ligand>
</feature>
<feature type="binding site" evidence="4">
    <location>
        <position position="725"/>
    </location>
    <ligand>
        <name>Zn(2+)</name>
        <dbReference type="ChEBI" id="CHEBI:29105"/>
        <label>3</label>
    </ligand>
</feature>
<feature type="binding site" evidence="4">
    <location>
        <position position="728"/>
    </location>
    <ligand>
        <name>Zn(2+)</name>
        <dbReference type="ChEBI" id="CHEBI:29105"/>
        <label>3</label>
    </ligand>
</feature>
<feature type="binding site" evidence="4">
    <location>
        <position position="733"/>
    </location>
    <ligand>
        <name>Zn(2+)</name>
        <dbReference type="ChEBI" id="CHEBI:29105"/>
        <label>4</label>
    </ligand>
</feature>
<feature type="binding site" evidence="4">
    <location>
        <position position="736"/>
    </location>
    <ligand>
        <name>Zn(2+)</name>
        <dbReference type="ChEBI" id="CHEBI:29105"/>
        <label>4</label>
    </ligand>
</feature>
<feature type="binding site" evidence="4">
    <location>
        <position position="741"/>
    </location>
    <ligand>
        <name>Zn(2+)</name>
        <dbReference type="ChEBI" id="CHEBI:29105"/>
        <label>4</label>
    </ligand>
</feature>
<feature type="binding site" evidence="4">
    <location>
        <position position="746"/>
    </location>
    <ligand>
        <name>Zn(2+)</name>
        <dbReference type="ChEBI" id="CHEBI:29105"/>
        <label>4</label>
    </ligand>
</feature>
<feature type="binding site" evidence="4">
    <location>
        <position position="782"/>
    </location>
    <ligand>
        <name>Zn(2+)</name>
        <dbReference type="ChEBI" id="CHEBI:29105"/>
        <label>5</label>
    </ligand>
</feature>
<feature type="binding site" evidence="4">
    <location>
        <position position="785"/>
    </location>
    <ligand>
        <name>Zn(2+)</name>
        <dbReference type="ChEBI" id="CHEBI:29105"/>
        <label>5</label>
    </ligand>
</feature>
<feature type="binding site" evidence="4">
    <location>
        <position position="800"/>
    </location>
    <ligand>
        <name>Zn(2+)</name>
        <dbReference type="ChEBI" id="CHEBI:29105"/>
        <label>5</label>
    </ligand>
</feature>
<feature type="binding site" evidence="4">
    <location>
        <position position="803"/>
    </location>
    <ligand>
        <name>Zn(2+)</name>
        <dbReference type="ChEBI" id="CHEBI:29105"/>
        <label>5</label>
    </ligand>
</feature>
<feature type="binding site" evidence="4">
    <location>
        <position position="808"/>
    </location>
    <ligand>
        <name>Zn(2+)</name>
        <dbReference type="ChEBI" id="CHEBI:29105"/>
        <label>6</label>
    </ligand>
</feature>
<feature type="binding site" evidence="4">
    <location>
        <position position="811"/>
    </location>
    <ligand>
        <name>Zn(2+)</name>
        <dbReference type="ChEBI" id="CHEBI:29105"/>
        <label>6</label>
    </ligand>
</feature>
<feature type="binding site" evidence="4">
    <location>
        <position position="819"/>
    </location>
    <ligand>
        <name>Zn(2+)</name>
        <dbReference type="ChEBI" id="CHEBI:29105"/>
        <label>6</label>
    </ligand>
</feature>
<feature type="binding site" evidence="4">
    <location>
        <position position="828"/>
    </location>
    <ligand>
        <name>Zn(2+)</name>
        <dbReference type="ChEBI" id="CHEBI:29105"/>
        <label>6</label>
    </ligand>
</feature>
<protein>
    <recommendedName>
        <fullName>E3 ubiquitin-protein ligase DDB_G0292642</fullName>
        <ecNumber evidence="1">2.3.2.31</ecNumber>
    </recommendedName>
</protein>
<sequence>MASVELEQQVDDLTVSKVTPFVEKNIDELNSLVQLMFTPSAPDIHCTQKLSKSQNTKLIQYKIRLEKTRSRILVLIDNYITHEEKLSHFLGLLDRIDDILTTIKIMSGEDEELNFTLPPTTNNNNNNTTNVLESSSDSDYDIIQPREFLKKSKPNLILSTKNSLSSLLKRKKSKNQITTTTTTTTTTANNNNTRRNRNNNNNNNNNANGANRTIDTSSEDDDESISSSDDDIVIGSRRSRAATISYLPNVPRANPTPINGRTPTPSHNFEPFTINTFLNSVNGVNKTSTTSTTTTTTTTTTAAGRTNKTVNRNNNNNNNNNNNKRFEIESEEESETDISSEEEENNNNNNNNSNNNNNSNNNNNLKLKTKSMSFTKNGIPLKIRSRINSESESEPENQLAESYELGKCQRKHISTPSLRLSSAHLPNTTTTTTTTTTTTTTTTSPKSVNNNDDDESSDSDSSDSEIENIKQTIKKNNGPPSPMTTEIIIGYSGHSKRLCNRYSLPTVQKSFTKQQLHEEIINFGRTPSRIKQSFLKPVNGDAELVFEYDDSEEEEEEEEEEEGEESDSESSSGSEGEVIVESFGIEKKVLRQYIKLKKEMEDRKKVSTKLEEPVECKICYMEYDQSNEVFTLECDHVYCFDCITEHLRILITEGRVLDISCPHPQCKKEIKESEIYMLTNEKNWLKYQKFSMIASLKTEPIKWCPTPDCDTPVRGGSERNPILNCPKCSNDFCWICGEYSHEGAKCGTEAMELQGRKNKSIESAATAYIDFLESNKHFVKPCPTCKSHIEKHDGCNHMTCINCQHQFCWLCMNPYQSGHYSSNEYPECFDRQYYSPFVPDTYTPPPPRRRHRKLKMAKKITLYTAAFTVGAPLLLIGGAVLLCVKIHKHRKNRARRNRNVGLY</sequence>
<accession>Q54CX4</accession>
<accession>Q54CX5</accession>
<gene>
    <name type="ORF">DDB_G0292642</name>
</gene>